<comment type="function">
    <text evidence="1">Cell division protein that is required for growth during stress conditions. May be involved in protecting or stabilizing the divisomal assembly under conditions of stress.</text>
</comment>
<comment type="subcellular location">
    <subcellularLocation>
        <location evidence="1">Periplasm</location>
    </subcellularLocation>
    <text evidence="1">Localizes to the division septum.</text>
</comment>
<comment type="PTM">
    <text>Predicted to be exported by the Tat system. The position of the signal peptide cleavage has not been experimentally proven.</text>
</comment>
<comment type="similarity">
    <text evidence="1">Belongs to the FtsP family.</text>
</comment>
<sequence length="472" mass="51330">MSLSRRRFIQASGLALCAGGLPLQARASGAQAVLPVPPLLESRRGQPLFLSLERTHWAFMGGRKVGTWGVNGVYLGPTVRVHSGDDVKLIYSNRLSESVAMEVAGLLVPGPLAGGPARQMSPGVDWSPVLPIRQAAATLWYHADTPRHMAPQVYSGLAGLWLVEDQYSKNAPLPNHYGVDDFPLILQDKRLDNFGVPEYDPPSSGGFLGDTLLVNGVQDPYVEVSRGWVRLRLLNASNARRYLLQLSDGRPFFVIASDQGLLPAPLQADTLPLAPGERREVLIDMSKGEEISITAGEAAGIMDRLRGLFEPSSMLVSTRVLTLRPTGLLPLMTDTLPARLAADPLPEGDVVNNRSIMLGSASSPGINGALWDPGRIDVQARQGTWERWTVRADTPQSFYIQGAQFLVKSVNNAPPLVEDRGWKDSVWVDGEVSLLVYFPQPSSEHFPFLFYSGTLELADRGSVGQMVVQPAQ</sequence>
<accession>E0T5V0</accession>
<dbReference type="EMBL" id="CP002154">
    <property type="protein sequence ID" value="ADM40294.1"/>
    <property type="molecule type" value="Genomic_DNA"/>
</dbReference>
<dbReference type="SMR" id="E0T5V0"/>
<dbReference type="KEGG" id="etd:ETAF_0171"/>
<dbReference type="PATRIC" id="fig|718251.5.peg.172"/>
<dbReference type="HOGENOM" id="CLU_009100_2_4_6"/>
<dbReference type="Proteomes" id="UP000002230">
    <property type="component" value="Chromosome"/>
</dbReference>
<dbReference type="GO" id="GO:0032153">
    <property type="term" value="C:cell division site"/>
    <property type="evidence" value="ECO:0007669"/>
    <property type="project" value="UniProtKB-UniRule"/>
</dbReference>
<dbReference type="GO" id="GO:0030288">
    <property type="term" value="C:outer membrane-bounded periplasmic space"/>
    <property type="evidence" value="ECO:0007669"/>
    <property type="project" value="UniProtKB-UniRule"/>
</dbReference>
<dbReference type="GO" id="GO:0005507">
    <property type="term" value="F:copper ion binding"/>
    <property type="evidence" value="ECO:0007669"/>
    <property type="project" value="InterPro"/>
</dbReference>
<dbReference type="GO" id="GO:0016491">
    <property type="term" value="F:oxidoreductase activity"/>
    <property type="evidence" value="ECO:0007669"/>
    <property type="project" value="InterPro"/>
</dbReference>
<dbReference type="GO" id="GO:0043093">
    <property type="term" value="P:FtsZ-dependent cytokinesis"/>
    <property type="evidence" value="ECO:0007669"/>
    <property type="project" value="UniProtKB-UniRule"/>
</dbReference>
<dbReference type="CDD" id="cd13867">
    <property type="entry name" value="CuRO_2_CueO_FtsP"/>
    <property type="match status" value="1"/>
</dbReference>
<dbReference type="CDD" id="cd13890">
    <property type="entry name" value="CuRO_3_CueO_FtsP"/>
    <property type="match status" value="1"/>
</dbReference>
<dbReference type="Gene3D" id="2.60.40.420">
    <property type="entry name" value="Cupredoxins - blue copper proteins"/>
    <property type="match status" value="3"/>
</dbReference>
<dbReference type="HAMAP" id="MF_00915">
    <property type="entry name" value="FtsP"/>
    <property type="match status" value="1"/>
</dbReference>
<dbReference type="InterPro" id="IPR011707">
    <property type="entry name" value="Cu-oxidase-like_N"/>
</dbReference>
<dbReference type="InterPro" id="IPR011706">
    <property type="entry name" value="Cu-oxidase_C"/>
</dbReference>
<dbReference type="InterPro" id="IPR045087">
    <property type="entry name" value="Cu-oxidase_fam"/>
</dbReference>
<dbReference type="InterPro" id="IPR008972">
    <property type="entry name" value="Cupredoxin"/>
</dbReference>
<dbReference type="InterPro" id="IPR026589">
    <property type="entry name" value="FtsP"/>
</dbReference>
<dbReference type="InterPro" id="IPR006311">
    <property type="entry name" value="TAT_signal"/>
</dbReference>
<dbReference type="NCBIfam" id="NF008135">
    <property type="entry name" value="PRK10883.1"/>
    <property type="match status" value="1"/>
</dbReference>
<dbReference type="PANTHER" id="PTHR48267:SF1">
    <property type="entry name" value="BILIRUBIN OXIDASE"/>
    <property type="match status" value="1"/>
</dbReference>
<dbReference type="PANTHER" id="PTHR48267">
    <property type="entry name" value="CUPREDOXIN SUPERFAMILY PROTEIN"/>
    <property type="match status" value="1"/>
</dbReference>
<dbReference type="Pfam" id="PF07731">
    <property type="entry name" value="Cu-oxidase_2"/>
    <property type="match status" value="1"/>
</dbReference>
<dbReference type="Pfam" id="PF07732">
    <property type="entry name" value="Cu-oxidase_3"/>
    <property type="match status" value="1"/>
</dbReference>
<dbReference type="SUPFAM" id="SSF49503">
    <property type="entry name" value="Cupredoxins"/>
    <property type="match status" value="3"/>
</dbReference>
<dbReference type="PROSITE" id="PS51318">
    <property type="entry name" value="TAT"/>
    <property type="match status" value="1"/>
</dbReference>
<name>FTSP_EDWTF</name>
<reference key="1">
    <citation type="submission" date="2010-08" db="EMBL/GenBank/DDBJ databases">
        <title>Genome comparisons of Edwardsiella bacteria analysed using deep sequencing technology.</title>
        <authorList>
            <person name="van Soest J.J."/>
            <person name="Henkel C.V."/>
            <person name="Jansen H.J."/>
            <person name="van den Hondel C.A.M.J.J."/>
            <person name="Bloemberg G.V."/>
            <person name="Meijer A.H."/>
            <person name="Spaink H.P."/>
        </authorList>
    </citation>
    <scope>NUCLEOTIDE SEQUENCE [LARGE SCALE GENOMIC DNA]</scope>
    <source>
        <strain>FL6-60</strain>
    </source>
</reference>
<protein>
    <recommendedName>
        <fullName evidence="1">Cell division protein FtsP</fullName>
    </recommendedName>
</protein>
<organism>
    <name type="scientific">Edwardsiella tarda (strain FL6-60)</name>
    <dbReference type="NCBI Taxonomy" id="718251"/>
    <lineage>
        <taxon>Bacteria</taxon>
        <taxon>Pseudomonadati</taxon>
        <taxon>Pseudomonadota</taxon>
        <taxon>Gammaproteobacteria</taxon>
        <taxon>Enterobacterales</taxon>
        <taxon>Hafniaceae</taxon>
        <taxon>Edwardsiella</taxon>
    </lineage>
</organism>
<evidence type="ECO:0000255" key="1">
    <source>
        <dbReference type="HAMAP-Rule" id="MF_00915"/>
    </source>
</evidence>
<gene>
    <name evidence="1" type="primary">ftsP</name>
    <name type="ordered locus">ETAF_0171</name>
</gene>
<feature type="signal peptide" description="Tat-type signal" evidence="1">
    <location>
        <begin position="1"/>
        <end position="32"/>
    </location>
</feature>
<feature type="chain" id="PRO_0000416006" description="Cell division protein FtsP">
    <location>
        <begin position="33"/>
        <end position="472"/>
    </location>
</feature>
<keyword id="KW-0131">Cell cycle</keyword>
<keyword id="KW-0132">Cell division</keyword>
<keyword id="KW-0574">Periplasm</keyword>
<keyword id="KW-1185">Reference proteome</keyword>
<keyword id="KW-0732">Signal</keyword>
<proteinExistence type="inferred from homology"/>